<comment type="function">
    <text evidence="1">One of the proteins required for the normal export of preproteins out of the cell cytoplasm. It is a molecular chaperone that binds to a subset of precursor proteins, maintaining them in a translocation-competent state. It also specifically binds to its receptor SecA.</text>
</comment>
<comment type="subunit">
    <text evidence="1">Homotetramer, a dimer of dimers. One homotetramer interacts with 1 SecA dimer.</text>
</comment>
<comment type="subcellular location">
    <subcellularLocation>
        <location evidence="1">Cytoplasm</location>
    </subcellularLocation>
</comment>
<comment type="similarity">
    <text evidence="1">Belongs to the SecB family.</text>
</comment>
<proteinExistence type="inferred from homology"/>
<sequence>MSENEQAAKAEAPIFHVVKLYLKDLSFESPNAPESFSVESEPKAEFNLDTKATQKDDDHYEVSLEVNVKVASGDGKILFMAEVSYGGLFMVKNVPSEHIPMVLGIDCPNILFPYVRQVISSVVLEGGYKPMVLDPINFAALFHHAQQQKAAQQGEKA</sequence>
<organism>
    <name type="scientific">Magnetococcus marinus (strain ATCC BAA-1437 / JCM 17883 / MC-1)</name>
    <dbReference type="NCBI Taxonomy" id="156889"/>
    <lineage>
        <taxon>Bacteria</taxon>
        <taxon>Pseudomonadati</taxon>
        <taxon>Pseudomonadota</taxon>
        <taxon>Alphaproteobacteria</taxon>
        <taxon>Magnetococcales</taxon>
        <taxon>Magnetococcaceae</taxon>
        <taxon>Magnetococcus</taxon>
    </lineage>
</organism>
<protein>
    <recommendedName>
        <fullName evidence="1">Protein-export protein SecB</fullName>
    </recommendedName>
</protein>
<accession>A0LD65</accession>
<dbReference type="EMBL" id="CP000471">
    <property type="protein sequence ID" value="ABK45908.1"/>
    <property type="molecule type" value="Genomic_DNA"/>
</dbReference>
<dbReference type="RefSeq" id="WP_011714965.1">
    <property type="nucleotide sequence ID" value="NC_008576.1"/>
</dbReference>
<dbReference type="SMR" id="A0LD65"/>
<dbReference type="STRING" id="156889.Mmc1_3422"/>
<dbReference type="KEGG" id="mgm:Mmc1_3422"/>
<dbReference type="eggNOG" id="COG1952">
    <property type="taxonomic scope" value="Bacteria"/>
</dbReference>
<dbReference type="HOGENOM" id="CLU_111574_1_0_5"/>
<dbReference type="OrthoDB" id="9795145at2"/>
<dbReference type="Proteomes" id="UP000002586">
    <property type="component" value="Chromosome"/>
</dbReference>
<dbReference type="GO" id="GO:0005737">
    <property type="term" value="C:cytoplasm"/>
    <property type="evidence" value="ECO:0007669"/>
    <property type="project" value="UniProtKB-SubCell"/>
</dbReference>
<dbReference type="GO" id="GO:0051082">
    <property type="term" value="F:unfolded protein binding"/>
    <property type="evidence" value="ECO:0007669"/>
    <property type="project" value="InterPro"/>
</dbReference>
<dbReference type="GO" id="GO:0006457">
    <property type="term" value="P:protein folding"/>
    <property type="evidence" value="ECO:0007669"/>
    <property type="project" value="UniProtKB-UniRule"/>
</dbReference>
<dbReference type="GO" id="GO:0051262">
    <property type="term" value="P:protein tetramerization"/>
    <property type="evidence" value="ECO:0007669"/>
    <property type="project" value="InterPro"/>
</dbReference>
<dbReference type="GO" id="GO:0015031">
    <property type="term" value="P:protein transport"/>
    <property type="evidence" value="ECO:0007669"/>
    <property type="project" value="UniProtKB-UniRule"/>
</dbReference>
<dbReference type="Gene3D" id="3.10.420.10">
    <property type="entry name" value="SecB-like"/>
    <property type="match status" value="1"/>
</dbReference>
<dbReference type="HAMAP" id="MF_00821">
    <property type="entry name" value="SecB"/>
    <property type="match status" value="1"/>
</dbReference>
<dbReference type="InterPro" id="IPR003708">
    <property type="entry name" value="SecB"/>
</dbReference>
<dbReference type="InterPro" id="IPR035958">
    <property type="entry name" value="SecB-like_sf"/>
</dbReference>
<dbReference type="NCBIfam" id="NF004392">
    <property type="entry name" value="PRK05751.1-3"/>
    <property type="match status" value="1"/>
</dbReference>
<dbReference type="NCBIfam" id="TIGR00809">
    <property type="entry name" value="secB"/>
    <property type="match status" value="1"/>
</dbReference>
<dbReference type="PANTHER" id="PTHR36918">
    <property type="match status" value="1"/>
</dbReference>
<dbReference type="PANTHER" id="PTHR36918:SF1">
    <property type="entry name" value="PROTEIN-EXPORT PROTEIN SECB"/>
    <property type="match status" value="1"/>
</dbReference>
<dbReference type="Pfam" id="PF02556">
    <property type="entry name" value="SecB"/>
    <property type="match status" value="1"/>
</dbReference>
<dbReference type="PRINTS" id="PR01594">
    <property type="entry name" value="SECBCHAPRONE"/>
</dbReference>
<dbReference type="SUPFAM" id="SSF54611">
    <property type="entry name" value="SecB-like"/>
    <property type="match status" value="1"/>
</dbReference>
<reference key="1">
    <citation type="journal article" date="2009" name="Appl. Environ. Microbiol.">
        <title>Complete genome sequence of the chemolithoautotrophic marine magnetotactic coccus strain MC-1.</title>
        <authorList>
            <person name="Schubbe S."/>
            <person name="Williams T.J."/>
            <person name="Xie G."/>
            <person name="Kiss H.E."/>
            <person name="Brettin T.S."/>
            <person name="Martinez D."/>
            <person name="Ross C.A."/>
            <person name="Schuler D."/>
            <person name="Cox B.L."/>
            <person name="Nealson K.H."/>
            <person name="Bazylinski D.A."/>
        </authorList>
    </citation>
    <scope>NUCLEOTIDE SEQUENCE [LARGE SCALE GENOMIC DNA]</scope>
    <source>
        <strain>ATCC BAA-1437 / JCM 17883 / MC-1</strain>
    </source>
</reference>
<keyword id="KW-0143">Chaperone</keyword>
<keyword id="KW-0963">Cytoplasm</keyword>
<keyword id="KW-0653">Protein transport</keyword>
<keyword id="KW-1185">Reference proteome</keyword>
<keyword id="KW-0811">Translocation</keyword>
<keyword id="KW-0813">Transport</keyword>
<gene>
    <name evidence="1" type="primary">secB</name>
    <name type="ordered locus">Mmc1_3422</name>
</gene>
<feature type="chain" id="PRO_0000318242" description="Protein-export protein SecB">
    <location>
        <begin position="1"/>
        <end position="157"/>
    </location>
</feature>
<evidence type="ECO:0000255" key="1">
    <source>
        <dbReference type="HAMAP-Rule" id="MF_00821"/>
    </source>
</evidence>
<name>SECB_MAGMM</name>